<proteinExistence type="inferred from homology"/>
<keyword id="KW-0963">Cytoplasm</keyword>
<keyword id="KW-0255">Endonuclease</keyword>
<keyword id="KW-0378">Hydrolase</keyword>
<keyword id="KW-0464">Manganese</keyword>
<keyword id="KW-0479">Metal-binding</keyword>
<keyword id="KW-0540">Nuclease</keyword>
<keyword id="KW-1185">Reference proteome</keyword>
<feature type="chain" id="PRO_0000111662" description="Ribonuclease HII">
    <location>
        <begin position="1"/>
        <end position="223"/>
    </location>
</feature>
<feature type="domain" description="RNase H type-2" evidence="2">
    <location>
        <begin position="1"/>
        <end position="219"/>
    </location>
</feature>
<feature type="binding site" evidence="1">
    <location>
        <position position="7"/>
    </location>
    <ligand>
        <name>a divalent metal cation</name>
        <dbReference type="ChEBI" id="CHEBI:60240"/>
    </ligand>
</feature>
<feature type="binding site" evidence="1">
    <location>
        <position position="8"/>
    </location>
    <ligand>
        <name>a divalent metal cation</name>
        <dbReference type="ChEBI" id="CHEBI:60240"/>
    </ligand>
</feature>
<feature type="binding site" evidence="1">
    <location>
        <position position="105"/>
    </location>
    <ligand>
        <name>a divalent metal cation</name>
        <dbReference type="ChEBI" id="CHEBI:60240"/>
    </ligand>
</feature>
<evidence type="ECO:0000255" key="1">
    <source>
        <dbReference type="HAMAP-Rule" id="MF_00052"/>
    </source>
</evidence>
<evidence type="ECO:0000255" key="2">
    <source>
        <dbReference type="PROSITE-ProRule" id="PRU01319"/>
    </source>
</evidence>
<dbReference type="EC" id="3.1.26.4" evidence="1"/>
<dbReference type="EMBL" id="AE010299">
    <property type="protein sequence ID" value="AAM05362.1"/>
    <property type="molecule type" value="Genomic_DNA"/>
</dbReference>
<dbReference type="RefSeq" id="WP_011021954.1">
    <property type="nucleotide sequence ID" value="NC_003552.1"/>
</dbReference>
<dbReference type="SMR" id="Q8TPF4"/>
<dbReference type="FunCoup" id="Q8TPF4">
    <property type="interactions" value="124"/>
</dbReference>
<dbReference type="STRING" id="188937.MA_1959"/>
<dbReference type="EnsemblBacteria" id="AAM05362">
    <property type="protein sequence ID" value="AAM05362"/>
    <property type="gene ID" value="MA_1959"/>
</dbReference>
<dbReference type="GeneID" id="1473848"/>
<dbReference type="KEGG" id="mac:MA_1959"/>
<dbReference type="HOGENOM" id="CLU_036532_0_4_2"/>
<dbReference type="InParanoid" id="Q8TPF4"/>
<dbReference type="OrthoDB" id="33866at2157"/>
<dbReference type="PhylomeDB" id="Q8TPF4"/>
<dbReference type="Proteomes" id="UP000002487">
    <property type="component" value="Chromosome"/>
</dbReference>
<dbReference type="GO" id="GO:0005737">
    <property type="term" value="C:cytoplasm"/>
    <property type="evidence" value="ECO:0007669"/>
    <property type="project" value="UniProtKB-SubCell"/>
</dbReference>
<dbReference type="GO" id="GO:0032299">
    <property type="term" value="C:ribonuclease H2 complex"/>
    <property type="evidence" value="ECO:0000318"/>
    <property type="project" value="GO_Central"/>
</dbReference>
<dbReference type="GO" id="GO:0030145">
    <property type="term" value="F:manganese ion binding"/>
    <property type="evidence" value="ECO:0007669"/>
    <property type="project" value="UniProtKB-UniRule"/>
</dbReference>
<dbReference type="GO" id="GO:0003723">
    <property type="term" value="F:RNA binding"/>
    <property type="evidence" value="ECO:0007669"/>
    <property type="project" value="InterPro"/>
</dbReference>
<dbReference type="GO" id="GO:0004523">
    <property type="term" value="F:RNA-DNA hybrid ribonuclease activity"/>
    <property type="evidence" value="ECO:0000318"/>
    <property type="project" value="GO_Central"/>
</dbReference>
<dbReference type="GO" id="GO:0043137">
    <property type="term" value="P:DNA replication, removal of RNA primer"/>
    <property type="evidence" value="ECO:0000318"/>
    <property type="project" value="GO_Central"/>
</dbReference>
<dbReference type="GO" id="GO:0006298">
    <property type="term" value="P:mismatch repair"/>
    <property type="evidence" value="ECO:0000318"/>
    <property type="project" value="GO_Central"/>
</dbReference>
<dbReference type="CDD" id="cd07180">
    <property type="entry name" value="RNase_HII_archaea_like"/>
    <property type="match status" value="1"/>
</dbReference>
<dbReference type="FunFam" id="1.10.10.460:FF:000001">
    <property type="entry name" value="Ribonuclease"/>
    <property type="match status" value="1"/>
</dbReference>
<dbReference type="FunFam" id="3.30.420.10:FF:000139">
    <property type="entry name" value="Ribonuclease HII"/>
    <property type="match status" value="1"/>
</dbReference>
<dbReference type="Gene3D" id="3.30.420.10">
    <property type="entry name" value="Ribonuclease H-like superfamily/Ribonuclease H"/>
    <property type="match status" value="1"/>
</dbReference>
<dbReference type="Gene3D" id="1.10.10.460">
    <property type="entry name" value="Ribonuclease hii. Domain 2"/>
    <property type="match status" value="1"/>
</dbReference>
<dbReference type="HAMAP" id="MF_00052_A">
    <property type="entry name" value="RNase_HII_A"/>
    <property type="match status" value="1"/>
</dbReference>
<dbReference type="InterPro" id="IPR004649">
    <property type="entry name" value="RNase_H2_suA"/>
</dbReference>
<dbReference type="InterPro" id="IPR001352">
    <property type="entry name" value="RNase_HII/HIII"/>
</dbReference>
<dbReference type="InterPro" id="IPR024567">
    <property type="entry name" value="RNase_HII/HIII_dom"/>
</dbReference>
<dbReference type="InterPro" id="IPR020787">
    <property type="entry name" value="RNase_HII_arc"/>
</dbReference>
<dbReference type="InterPro" id="IPR023160">
    <property type="entry name" value="RNase_HII_hlx-loop-hlx_cap_dom"/>
</dbReference>
<dbReference type="InterPro" id="IPR012337">
    <property type="entry name" value="RNaseH-like_sf"/>
</dbReference>
<dbReference type="InterPro" id="IPR036397">
    <property type="entry name" value="RNaseH_sf"/>
</dbReference>
<dbReference type="NCBIfam" id="TIGR00729">
    <property type="entry name" value="ribonuclease HII"/>
    <property type="match status" value="1"/>
</dbReference>
<dbReference type="PANTHER" id="PTHR10954:SF23">
    <property type="entry name" value="RIBONUCLEASE"/>
    <property type="match status" value="1"/>
</dbReference>
<dbReference type="PANTHER" id="PTHR10954">
    <property type="entry name" value="RIBONUCLEASE H2 SUBUNIT A"/>
    <property type="match status" value="1"/>
</dbReference>
<dbReference type="Pfam" id="PF01351">
    <property type="entry name" value="RNase_HII"/>
    <property type="match status" value="1"/>
</dbReference>
<dbReference type="SUPFAM" id="SSF53098">
    <property type="entry name" value="Ribonuclease H-like"/>
    <property type="match status" value="1"/>
</dbReference>
<dbReference type="PROSITE" id="PS51975">
    <property type="entry name" value="RNASE_H_2"/>
    <property type="match status" value="1"/>
</dbReference>
<comment type="function">
    <text evidence="1">Endonuclease that specifically degrades the RNA of RNA-DNA hybrids.</text>
</comment>
<comment type="catalytic activity">
    <reaction evidence="1">
        <text>Endonucleolytic cleavage to 5'-phosphomonoester.</text>
        <dbReference type="EC" id="3.1.26.4"/>
    </reaction>
</comment>
<comment type="cofactor">
    <cofactor evidence="1">
        <name>Mn(2+)</name>
        <dbReference type="ChEBI" id="CHEBI:29035"/>
    </cofactor>
    <cofactor evidence="1">
        <name>Mg(2+)</name>
        <dbReference type="ChEBI" id="CHEBI:18420"/>
    </cofactor>
    <text evidence="1">Manganese or magnesium. Binds 1 divalent metal ion per monomer in the absence of substrate. May bind a second metal ion after substrate binding.</text>
</comment>
<comment type="subcellular location">
    <subcellularLocation>
        <location evidence="1">Cytoplasm</location>
    </subcellularLocation>
</comment>
<comment type="similarity">
    <text evidence="1">Belongs to the RNase HII family.</text>
</comment>
<organism>
    <name type="scientific">Methanosarcina acetivorans (strain ATCC 35395 / DSM 2834 / JCM 12185 / C2A)</name>
    <dbReference type="NCBI Taxonomy" id="188937"/>
    <lineage>
        <taxon>Archaea</taxon>
        <taxon>Methanobacteriati</taxon>
        <taxon>Methanobacteriota</taxon>
        <taxon>Stenosarchaea group</taxon>
        <taxon>Methanomicrobia</taxon>
        <taxon>Methanosarcinales</taxon>
        <taxon>Methanosarcinaceae</taxon>
        <taxon>Methanosarcina</taxon>
    </lineage>
</organism>
<reference key="1">
    <citation type="journal article" date="2002" name="Genome Res.">
        <title>The genome of Methanosarcina acetivorans reveals extensive metabolic and physiological diversity.</title>
        <authorList>
            <person name="Galagan J.E."/>
            <person name="Nusbaum C."/>
            <person name="Roy A."/>
            <person name="Endrizzi M.G."/>
            <person name="Macdonald P."/>
            <person name="FitzHugh W."/>
            <person name="Calvo S."/>
            <person name="Engels R."/>
            <person name="Smirnov S."/>
            <person name="Atnoor D."/>
            <person name="Brown A."/>
            <person name="Allen N."/>
            <person name="Naylor J."/>
            <person name="Stange-Thomann N."/>
            <person name="DeArellano K."/>
            <person name="Johnson R."/>
            <person name="Linton L."/>
            <person name="McEwan P."/>
            <person name="McKernan K."/>
            <person name="Talamas J."/>
            <person name="Tirrell A."/>
            <person name="Ye W."/>
            <person name="Zimmer A."/>
            <person name="Barber R.D."/>
            <person name="Cann I."/>
            <person name="Graham D.E."/>
            <person name="Grahame D.A."/>
            <person name="Guss A.M."/>
            <person name="Hedderich R."/>
            <person name="Ingram-Smith C."/>
            <person name="Kuettner H.C."/>
            <person name="Krzycki J.A."/>
            <person name="Leigh J.A."/>
            <person name="Li W."/>
            <person name="Liu J."/>
            <person name="Mukhopadhyay B."/>
            <person name="Reeve J.N."/>
            <person name="Smith K."/>
            <person name="Springer T.A."/>
            <person name="Umayam L.A."/>
            <person name="White O."/>
            <person name="White R.H."/>
            <person name="de Macario E.C."/>
            <person name="Ferry J.G."/>
            <person name="Jarrell K.F."/>
            <person name="Jing H."/>
            <person name="Macario A.J.L."/>
            <person name="Paulsen I.T."/>
            <person name="Pritchett M."/>
            <person name="Sowers K.R."/>
            <person name="Swanson R.V."/>
            <person name="Zinder S.H."/>
            <person name="Lander E."/>
            <person name="Metcalf W.W."/>
            <person name="Birren B."/>
        </authorList>
    </citation>
    <scope>NUCLEOTIDE SEQUENCE [LARGE SCALE GENOMIC DNA]</scope>
    <source>
        <strain>ATCC 35395 / DSM 2834 / JCM 12185 / C2A</strain>
    </source>
</reference>
<gene>
    <name evidence="1" type="primary">rnhB</name>
    <name type="ordered locus">MA_1959</name>
</gene>
<accession>Q8TPF4</accession>
<name>RNH2_METAC</name>
<sequence>MMIAGIDEAGKGPVIGPMCIGGVKIEESRAHILKVLGVADSKKLTPKKREQLASQIKKHADGFFILEITPAQIDELRKIMSMNEIMVICFAKVLEQLKPDIVYADAADVKAERFAENLRRQYAKTNPAHAKKIEIISMHQADAIYPVVSAASIIAKVRRDELIEEIKKEWSVDFGSGYPSDPKTKAFLLKWGKEHDGKFPEIVRQSWQTVENIREELEKAGKK</sequence>
<protein>
    <recommendedName>
        <fullName evidence="1">Ribonuclease HII</fullName>
        <shortName evidence="1">RNase HII</shortName>
        <ecNumber evidence="1">3.1.26.4</ecNumber>
    </recommendedName>
</protein>